<accession>Q6NTY6</accession>
<proteinExistence type="evidence at transcript level"/>
<feature type="chain" id="PRO_0000386428" description="Early growth response protein 1-B">
    <location>
        <begin position="1"/>
        <end position="475"/>
    </location>
</feature>
<feature type="zinc finger region" description="C2H2-type 1" evidence="4">
    <location>
        <begin position="284"/>
        <end position="308"/>
    </location>
</feature>
<feature type="zinc finger region" description="C2H2-type 2" evidence="4">
    <location>
        <begin position="314"/>
        <end position="336"/>
    </location>
</feature>
<feature type="zinc finger region" description="C2H2-type 3" evidence="4">
    <location>
        <begin position="342"/>
        <end position="364"/>
    </location>
</feature>
<feature type="region of interest" description="Disordered" evidence="5">
    <location>
        <begin position="109"/>
        <end position="180"/>
    </location>
</feature>
<feature type="region of interest" description="Disordered" evidence="5">
    <location>
        <begin position="264"/>
        <end position="285"/>
    </location>
</feature>
<feature type="region of interest" description="Disordered" evidence="5">
    <location>
        <begin position="355"/>
        <end position="379"/>
    </location>
</feature>
<feature type="compositionally biased region" description="Low complexity" evidence="5">
    <location>
        <begin position="111"/>
        <end position="140"/>
    </location>
</feature>
<feature type="compositionally biased region" description="Polar residues" evidence="5">
    <location>
        <begin position="170"/>
        <end position="179"/>
    </location>
</feature>
<feature type="compositionally biased region" description="Basic residues" evidence="5">
    <location>
        <begin position="359"/>
        <end position="369"/>
    </location>
</feature>
<feature type="site" description="Interaction with DNA" evidence="2">
    <location>
        <position position="282"/>
    </location>
</feature>
<feature type="site" description="Interaction with DNA" evidence="1">
    <location>
        <position position="293"/>
    </location>
</feature>
<feature type="site" description="Interaction with DNA" evidence="1">
    <location>
        <position position="297"/>
    </location>
</feature>
<feature type="site" description="Interaction with DNA" evidence="2">
    <location>
        <position position="303"/>
    </location>
</feature>
<feature type="site" description="Interaction with DNA" evidence="1">
    <location>
        <position position="321"/>
    </location>
</feature>
<feature type="site" description="Interaction with DNA" evidence="2">
    <location>
        <position position="325"/>
    </location>
</feature>
<feature type="site" description="Interaction with DNA" evidence="2">
    <location>
        <position position="349"/>
    </location>
</feature>
<feature type="site" description="Interaction with DNA" evidence="2">
    <location>
        <position position="353"/>
    </location>
</feature>
<feature type="site" description="Interaction with DNA" evidence="2">
    <location>
        <position position="359"/>
    </location>
</feature>
<keyword id="KW-0010">Activator</keyword>
<keyword id="KW-0090">Biological rhythms</keyword>
<keyword id="KW-0963">Cytoplasm</keyword>
<keyword id="KW-0238">DNA-binding</keyword>
<keyword id="KW-0479">Metal-binding</keyword>
<keyword id="KW-0539">Nucleus</keyword>
<keyword id="KW-1185">Reference proteome</keyword>
<keyword id="KW-0677">Repeat</keyword>
<keyword id="KW-0804">Transcription</keyword>
<keyword id="KW-0805">Transcription regulation</keyword>
<keyword id="KW-0862">Zinc</keyword>
<keyword id="KW-0863">Zinc-finger</keyword>
<protein>
    <recommendedName>
        <fullName>Early growth response protein 1-B</fullName>
        <shortName>EGR-1-B</shortName>
    </recommendedName>
</protein>
<reference evidence="6" key="1">
    <citation type="submission" date="2004-04" db="EMBL/GenBank/DDBJ databases">
        <authorList>
            <consortium name="NIH - Xenopus Gene Collection (XGC) project"/>
        </authorList>
    </citation>
    <scope>NUCLEOTIDE SEQUENCE [LARGE SCALE MRNA]</scope>
    <source>
        <tissue evidence="6">Gastrula</tissue>
    </source>
</reference>
<sequence>MALAKTDMLVSPLQISDPFSSFPHSPTMDNYPKLDGAEQFDHHAADAFSEMSLSNEKAVLESSYANHTTRLPSLTYTGRFSLEPAPNSSNTLWPEPLFSLVSGLVGMANVSSSSAPSSSPSSSSSSSSSSSSQSPPLSCSVQSNESSPIYSAAPTFPNSSPEMFPDHSPQPFQNASTASIPYPPPAYPVSKTTFQVPMIPDYLFPQQQGDVSLVSADQKPFQAMENRTQQPSLTPLSTIKAFATQTSQDLKTINSTYQSQIIKPSRMRKYPNRPSKTPPHERPYACPVESCDRRFSRSDELTRHIRIHTGQKPFQCRICMRNFSRSDHLTTHIRTHTGEKPFACDICGRKFARSDERKRHTKIHLRQKDKKADKATPVSIASPVSAYSPSASTSYPSPVPTSYSSPVSSCYPSPVHSSFPSPTTAVTYPSVTSTFQTQCITSFPSSIVTNSYSSPVSSALSDMSVTYSPRTIEIC</sequence>
<evidence type="ECO:0000250" key="1">
    <source>
        <dbReference type="UniProtKB" id="P08046"/>
    </source>
</evidence>
<evidence type="ECO:0000250" key="2">
    <source>
        <dbReference type="UniProtKB" id="P18146"/>
    </source>
</evidence>
<evidence type="ECO:0000255" key="3"/>
<evidence type="ECO:0000255" key="4">
    <source>
        <dbReference type="PROSITE-ProRule" id="PRU00042"/>
    </source>
</evidence>
<evidence type="ECO:0000256" key="5">
    <source>
        <dbReference type="SAM" id="MobiDB-lite"/>
    </source>
</evidence>
<evidence type="ECO:0000312" key="6">
    <source>
        <dbReference type="EMBL" id="AAH68816.1"/>
    </source>
</evidence>
<dbReference type="EMBL" id="BC068816">
    <property type="protein sequence ID" value="AAH68816.1"/>
    <property type="molecule type" value="mRNA"/>
</dbReference>
<dbReference type="SMR" id="Q6NTY6"/>
<dbReference type="DNASU" id="414518"/>
<dbReference type="GeneID" id="414518"/>
<dbReference type="KEGG" id="xla:414518"/>
<dbReference type="AGR" id="Xenbase:XB-GENE-6252570"/>
<dbReference type="CTD" id="414518"/>
<dbReference type="Xenbase" id="XB-GENE-6252570">
    <property type="gene designation" value="egr1.S"/>
</dbReference>
<dbReference type="OrthoDB" id="10018191at2759"/>
<dbReference type="Proteomes" id="UP000186698">
    <property type="component" value="Chromosome 3S"/>
</dbReference>
<dbReference type="Bgee" id="414518">
    <property type="expression patterns" value="Expressed in brain and 17 other cell types or tissues"/>
</dbReference>
<dbReference type="GO" id="GO:0005737">
    <property type="term" value="C:cytoplasm"/>
    <property type="evidence" value="ECO:0000250"/>
    <property type="project" value="UniProtKB"/>
</dbReference>
<dbReference type="GO" id="GO:0005634">
    <property type="term" value="C:nucleus"/>
    <property type="evidence" value="ECO:0000250"/>
    <property type="project" value="UniProtKB"/>
</dbReference>
<dbReference type="GO" id="GO:0003700">
    <property type="term" value="F:DNA-binding transcription factor activity"/>
    <property type="evidence" value="ECO:0000250"/>
    <property type="project" value="UniProtKB"/>
</dbReference>
<dbReference type="GO" id="GO:0000981">
    <property type="term" value="F:DNA-binding transcription factor activity, RNA polymerase II-specific"/>
    <property type="evidence" value="ECO:0000318"/>
    <property type="project" value="GO_Central"/>
</dbReference>
<dbReference type="GO" id="GO:0010385">
    <property type="term" value="F:double-stranded methylated DNA binding"/>
    <property type="evidence" value="ECO:0000250"/>
    <property type="project" value="UniProtKB"/>
</dbReference>
<dbReference type="GO" id="GO:0044729">
    <property type="term" value="F:hemi-methylated DNA-binding"/>
    <property type="evidence" value="ECO:0000250"/>
    <property type="project" value="UniProtKB"/>
</dbReference>
<dbReference type="GO" id="GO:1990841">
    <property type="term" value="F:promoter-specific chromatin binding"/>
    <property type="evidence" value="ECO:0000250"/>
    <property type="project" value="UniProtKB"/>
</dbReference>
<dbReference type="GO" id="GO:0000978">
    <property type="term" value="F:RNA polymerase II cis-regulatory region sequence-specific DNA binding"/>
    <property type="evidence" value="ECO:0000318"/>
    <property type="project" value="GO_Central"/>
</dbReference>
<dbReference type="GO" id="GO:0043565">
    <property type="term" value="F:sequence-specific DNA binding"/>
    <property type="evidence" value="ECO:0000250"/>
    <property type="project" value="UniProtKB"/>
</dbReference>
<dbReference type="GO" id="GO:0008270">
    <property type="term" value="F:zinc ion binding"/>
    <property type="evidence" value="ECO:0000250"/>
    <property type="project" value="UniProtKB"/>
</dbReference>
<dbReference type="GO" id="GO:0032922">
    <property type="term" value="P:circadian regulation of gene expression"/>
    <property type="evidence" value="ECO:0000250"/>
    <property type="project" value="UniProtKB"/>
</dbReference>
<dbReference type="GO" id="GO:0045893">
    <property type="term" value="P:positive regulation of DNA-templated transcription"/>
    <property type="evidence" value="ECO:0000250"/>
    <property type="project" value="UniProtKB"/>
</dbReference>
<dbReference type="GO" id="GO:0045944">
    <property type="term" value="P:positive regulation of transcription by RNA polymerase II"/>
    <property type="evidence" value="ECO:0000250"/>
    <property type="project" value="UniProtKB"/>
</dbReference>
<dbReference type="GO" id="GO:0006355">
    <property type="term" value="P:regulation of DNA-templated transcription"/>
    <property type="evidence" value="ECO:0000250"/>
    <property type="project" value="UniProtKB"/>
</dbReference>
<dbReference type="GO" id="GO:0006357">
    <property type="term" value="P:regulation of transcription by RNA polymerase II"/>
    <property type="evidence" value="ECO:0000318"/>
    <property type="project" value="GO_Central"/>
</dbReference>
<dbReference type="FunFam" id="3.30.160.60:FF:000769">
    <property type="entry name" value="Early growth response 2b"/>
    <property type="match status" value="1"/>
</dbReference>
<dbReference type="FunFam" id="3.30.160.60:FF:000324">
    <property type="entry name" value="Early growth response protein 4"/>
    <property type="match status" value="1"/>
</dbReference>
<dbReference type="FunFam" id="3.30.160.60:FF:000419">
    <property type="entry name" value="Early growth response protein 4"/>
    <property type="match status" value="1"/>
</dbReference>
<dbReference type="Gene3D" id="3.30.160.60">
    <property type="entry name" value="Classic Zinc Finger"/>
    <property type="match status" value="3"/>
</dbReference>
<dbReference type="InterPro" id="IPR021839">
    <property type="entry name" value="EGR1_C"/>
</dbReference>
<dbReference type="InterPro" id="IPR021849">
    <property type="entry name" value="EGR_N"/>
</dbReference>
<dbReference type="InterPro" id="IPR036236">
    <property type="entry name" value="Znf_C2H2_sf"/>
</dbReference>
<dbReference type="InterPro" id="IPR013087">
    <property type="entry name" value="Znf_C2H2_type"/>
</dbReference>
<dbReference type="PANTHER" id="PTHR23235:SF42">
    <property type="entry name" value="EARLY GROWTH RESPONSE PROTEIN 1"/>
    <property type="match status" value="1"/>
</dbReference>
<dbReference type="PANTHER" id="PTHR23235">
    <property type="entry name" value="KRUEPPEL-LIKE TRANSCRIPTION FACTOR"/>
    <property type="match status" value="1"/>
</dbReference>
<dbReference type="Pfam" id="PF11914">
    <property type="entry name" value="DUF3432"/>
    <property type="match status" value="1"/>
</dbReference>
<dbReference type="Pfam" id="PF11928">
    <property type="entry name" value="DUF3446"/>
    <property type="match status" value="1"/>
</dbReference>
<dbReference type="Pfam" id="PF00096">
    <property type="entry name" value="zf-C2H2"/>
    <property type="match status" value="3"/>
</dbReference>
<dbReference type="SMART" id="SM00355">
    <property type="entry name" value="ZnF_C2H2"/>
    <property type="match status" value="3"/>
</dbReference>
<dbReference type="SUPFAM" id="SSF57667">
    <property type="entry name" value="beta-beta-alpha zinc fingers"/>
    <property type="match status" value="2"/>
</dbReference>
<dbReference type="PROSITE" id="PS00028">
    <property type="entry name" value="ZINC_FINGER_C2H2_1"/>
    <property type="match status" value="3"/>
</dbReference>
<dbReference type="PROSITE" id="PS50157">
    <property type="entry name" value="ZINC_FINGER_C2H2_2"/>
    <property type="match status" value="3"/>
</dbReference>
<name>EGR1B_XENLA</name>
<comment type="function">
    <text evidence="1 2">Transcriptional regulator. Recognizes and binds to the DNA sequence 5'-GCG(T/G)GGGCG-3'(EGR-site) in the promoter region of target genes (By similarity). Binds double-stranded target DNA, irrespective of the cytosine methylation status (By similarity). Regulates the transcription of numerous target genes, and thereby plays an important role in regulating the response to growth factors, DNA damage, and ischemia. Plays a role in the regulation of cell survival, proliferation and cell death. Mediates responses to ischemia and hypoxia; regulates the expression of proteins that are involved in inflammatory processes (By similarity). Plays a role in regulating the expression of circadian clock genes (By similarity).</text>
</comment>
<comment type="subcellular location">
    <subcellularLocation>
        <location evidence="2">Nucleus</location>
    </subcellularLocation>
    <subcellularLocation>
        <location evidence="2">Cytoplasm</location>
    </subcellularLocation>
</comment>
<comment type="domain">
    <text evidence="2">Binds to DNA motifs with the sequence 5'-GCG(T/G)GGGCG-3' via its C2H2-type zinc fingers. The first, most N-terminal zinc finger binds to the 3'-GCG motif, the middle zinc finger interacts with the central TGG motif, and the C-terminal zinc finger binds to the 5'-GCG motif. Binds double-stranded target DNA, irrespective of the cytosine methylation status. Has reduced affinity for target DNA where the cytosines have been oxidized to 5-hydroxymethylcytosine. Does not bind target DNA where the cytosines have been oxidized to 5-formylcytosine or 5-carboxylcytosine.</text>
</comment>
<comment type="similarity">
    <text evidence="3">Belongs to the EGR C2H2-type zinc-finger protein family.</text>
</comment>
<gene>
    <name type="primary">egr1-b</name>
</gene>
<organism>
    <name type="scientific">Xenopus laevis</name>
    <name type="common">African clawed frog</name>
    <dbReference type="NCBI Taxonomy" id="8355"/>
    <lineage>
        <taxon>Eukaryota</taxon>
        <taxon>Metazoa</taxon>
        <taxon>Chordata</taxon>
        <taxon>Craniata</taxon>
        <taxon>Vertebrata</taxon>
        <taxon>Euteleostomi</taxon>
        <taxon>Amphibia</taxon>
        <taxon>Batrachia</taxon>
        <taxon>Anura</taxon>
        <taxon>Pipoidea</taxon>
        <taxon>Pipidae</taxon>
        <taxon>Xenopodinae</taxon>
        <taxon>Xenopus</taxon>
        <taxon>Xenopus</taxon>
    </lineage>
</organism>